<feature type="chain" id="PRO_1000096626" description="DNA mismatch repair protein MutL">
    <location>
        <begin position="1"/>
        <end position="607"/>
    </location>
</feature>
<accession>B4UCW3</accession>
<comment type="function">
    <text evidence="1">This protein is involved in the repair of mismatches in DNA. It is required for dam-dependent methyl-directed DNA mismatch repair. May act as a 'molecular matchmaker', a protein that promotes the formation of a stable complex between two or more DNA-binding proteins in an ATP-dependent manner without itself being part of a final effector complex.</text>
</comment>
<comment type="similarity">
    <text evidence="1">Belongs to the DNA mismatch repair MutL/HexB family.</text>
</comment>
<keyword id="KW-0227">DNA damage</keyword>
<keyword id="KW-0234">DNA repair</keyword>
<dbReference type="EMBL" id="CP001131">
    <property type="protein sequence ID" value="ACG73360.1"/>
    <property type="molecule type" value="Genomic_DNA"/>
</dbReference>
<dbReference type="RefSeq" id="WP_012526161.1">
    <property type="nucleotide sequence ID" value="NC_011145.1"/>
</dbReference>
<dbReference type="SMR" id="B4UCW3"/>
<dbReference type="KEGG" id="ank:AnaeK_2133"/>
<dbReference type="HOGENOM" id="CLU_004131_4_2_7"/>
<dbReference type="OrthoDB" id="9763467at2"/>
<dbReference type="Proteomes" id="UP000001871">
    <property type="component" value="Chromosome"/>
</dbReference>
<dbReference type="GO" id="GO:0032300">
    <property type="term" value="C:mismatch repair complex"/>
    <property type="evidence" value="ECO:0007669"/>
    <property type="project" value="InterPro"/>
</dbReference>
<dbReference type="GO" id="GO:0005524">
    <property type="term" value="F:ATP binding"/>
    <property type="evidence" value="ECO:0007669"/>
    <property type="project" value="InterPro"/>
</dbReference>
<dbReference type="GO" id="GO:0016887">
    <property type="term" value="F:ATP hydrolysis activity"/>
    <property type="evidence" value="ECO:0007669"/>
    <property type="project" value="InterPro"/>
</dbReference>
<dbReference type="GO" id="GO:0140664">
    <property type="term" value="F:ATP-dependent DNA damage sensor activity"/>
    <property type="evidence" value="ECO:0007669"/>
    <property type="project" value="InterPro"/>
</dbReference>
<dbReference type="GO" id="GO:0030983">
    <property type="term" value="F:mismatched DNA binding"/>
    <property type="evidence" value="ECO:0007669"/>
    <property type="project" value="InterPro"/>
</dbReference>
<dbReference type="GO" id="GO:0006298">
    <property type="term" value="P:mismatch repair"/>
    <property type="evidence" value="ECO:0007669"/>
    <property type="project" value="UniProtKB-UniRule"/>
</dbReference>
<dbReference type="CDD" id="cd16926">
    <property type="entry name" value="HATPase_MutL-MLH-PMS-like"/>
    <property type="match status" value="1"/>
</dbReference>
<dbReference type="CDD" id="cd00782">
    <property type="entry name" value="MutL_Trans"/>
    <property type="match status" value="1"/>
</dbReference>
<dbReference type="FunFam" id="3.30.565.10:FF:000003">
    <property type="entry name" value="DNA mismatch repair endonuclease MutL"/>
    <property type="match status" value="1"/>
</dbReference>
<dbReference type="Gene3D" id="3.30.230.10">
    <property type="match status" value="1"/>
</dbReference>
<dbReference type="Gene3D" id="3.30.565.10">
    <property type="entry name" value="Histidine kinase-like ATPase, C-terminal domain"/>
    <property type="match status" value="1"/>
</dbReference>
<dbReference type="Gene3D" id="3.30.1540.20">
    <property type="entry name" value="MutL, C-terminal domain, dimerisation subdomain"/>
    <property type="match status" value="1"/>
</dbReference>
<dbReference type="Gene3D" id="3.30.1370.100">
    <property type="entry name" value="MutL, C-terminal domain, regulatory subdomain"/>
    <property type="match status" value="1"/>
</dbReference>
<dbReference type="HAMAP" id="MF_00149">
    <property type="entry name" value="DNA_mis_repair"/>
    <property type="match status" value="1"/>
</dbReference>
<dbReference type="InterPro" id="IPR020667">
    <property type="entry name" value="DNA_mismatch_repair_MutL"/>
</dbReference>
<dbReference type="InterPro" id="IPR013507">
    <property type="entry name" value="DNA_mismatch_S5_2-like"/>
</dbReference>
<dbReference type="InterPro" id="IPR036890">
    <property type="entry name" value="HATPase_C_sf"/>
</dbReference>
<dbReference type="InterPro" id="IPR002099">
    <property type="entry name" value="MutL/Mlh/PMS"/>
</dbReference>
<dbReference type="InterPro" id="IPR038973">
    <property type="entry name" value="MutL/Mlh/Pms-like"/>
</dbReference>
<dbReference type="InterPro" id="IPR014790">
    <property type="entry name" value="MutL_C"/>
</dbReference>
<dbReference type="InterPro" id="IPR042120">
    <property type="entry name" value="MutL_C_dimsub"/>
</dbReference>
<dbReference type="InterPro" id="IPR042121">
    <property type="entry name" value="MutL_C_regsub"/>
</dbReference>
<dbReference type="InterPro" id="IPR037198">
    <property type="entry name" value="MutL_C_sf"/>
</dbReference>
<dbReference type="InterPro" id="IPR020568">
    <property type="entry name" value="Ribosomal_Su5_D2-typ_SF"/>
</dbReference>
<dbReference type="InterPro" id="IPR014721">
    <property type="entry name" value="Ribsml_uS5_D2-typ_fold_subgr"/>
</dbReference>
<dbReference type="NCBIfam" id="TIGR00585">
    <property type="entry name" value="mutl"/>
    <property type="match status" value="1"/>
</dbReference>
<dbReference type="PANTHER" id="PTHR10073">
    <property type="entry name" value="DNA MISMATCH REPAIR PROTEIN MLH, PMS, MUTL"/>
    <property type="match status" value="1"/>
</dbReference>
<dbReference type="PANTHER" id="PTHR10073:SF12">
    <property type="entry name" value="DNA MISMATCH REPAIR PROTEIN MLH1"/>
    <property type="match status" value="1"/>
</dbReference>
<dbReference type="Pfam" id="PF01119">
    <property type="entry name" value="DNA_mis_repair"/>
    <property type="match status" value="1"/>
</dbReference>
<dbReference type="Pfam" id="PF13589">
    <property type="entry name" value="HATPase_c_3"/>
    <property type="match status" value="1"/>
</dbReference>
<dbReference type="Pfam" id="PF08676">
    <property type="entry name" value="MutL_C"/>
    <property type="match status" value="1"/>
</dbReference>
<dbReference type="SMART" id="SM01340">
    <property type="entry name" value="DNA_mis_repair"/>
    <property type="match status" value="1"/>
</dbReference>
<dbReference type="SMART" id="SM00853">
    <property type="entry name" value="MutL_C"/>
    <property type="match status" value="1"/>
</dbReference>
<dbReference type="SUPFAM" id="SSF55874">
    <property type="entry name" value="ATPase domain of HSP90 chaperone/DNA topoisomerase II/histidine kinase"/>
    <property type="match status" value="1"/>
</dbReference>
<dbReference type="SUPFAM" id="SSF118116">
    <property type="entry name" value="DNA mismatch repair protein MutL"/>
    <property type="match status" value="1"/>
</dbReference>
<dbReference type="SUPFAM" id="SSF54211">
    <property type="entry name" value="Ribosomal protein S5 domain 2-like"/>
    <property type="match status" value="1"/>
</dbReference>
<gene>
    <name evidence="1" type="primary">mutL</name>
    <name type="ordered locus">AnaeK_2133</name>
</gene>
<organism>
    <name type="scientific">Anaeromyxobacter sp. (strain K)</name>
    <dbReference type="NCBI Taxonomy" id="447217"/>
    <lineage>
        <taxon>Bacteria</taxon>
        <taxon>Pseudomonadati</taxon>
        <taxon>Myxococcota</taxon>
        <taxon>Myxococcia</taxon>
        <taxon>Myxococcales</taxon>
        <taxon>Cystobacterineae</taxon>
        <taxon>Anaeromyxobacteraceae</taxon>
        <taxon>Anaeromyxobacter</taxon>
    </lineage>
</organism>
<protein>
    <recommendedName>
        <fullName evidence="1">DNA mismatch repair protein MutL</fullName>
    </recommendedName>
</protein>
<proteinExistence type="inferred from homology"/>
<sequence length="607" mass="63822">MPRIHVLPPGLVNQIAAGEVVERPASIVKELVENALDAGATSVGVDVEEGGLALVRVADDGSGMDRDDALLALERHATSKLRDAEGLAAIGTMGFRGEAVPAIASVSRFRLDTSAGEDGAGTRVEIEGGVLGEVAPVARPRGTTVEVRDLFFNTPARRKFMRAASTEAGHVSEAVIRLALARPDVGFTLRSGGRLVLGARAGGGLADRAGQALGREAHRHLLPVDARRGEVRVHGLICSPDHSEATGRALYLFVNGRYVRDRAAAHAVLRAFAGTLPPGRHPAGVLFVELPLHRVDVNVHPQKLEVRFAEGREVFDALFHTVAGALRTAPWLRARPQPGDGVPVGDGGGPAPVPVAGEEAAEVLAWARAARPPEGSGATLVQPAPGAWATGRLAFPVVPAPGAGPEAGPRPEGYFAGLRYVGQHARTYLLCEAPGGTLVVIDQHASHERMLFHRLREAFRARRIPVQPFLLPQVVTLPPAAARALEAGLAELGRLGFDAEPFGGEAFAVKGAPAALAGVDLTALLTDLGSQLAEVERGSAVDDAFHDLLATMACHAAVRANQDVSPEEARALLDGLDAIDFKARCPHGRPVVFELSLADLERRVGRR</sequence>
<reference key="1">
    <citation type="submission" date="2008-08" db="EMBL/GenBank/DDBJ databases">
        <title>Complete sequence of Anaeromyxobacter sp. K.</title>
        <authorList>
            <consortium name="US DOE Joint Genome Institute"/>
            <person name="Lucas S."/>
            <person name="Copeland A."/>
            <person name="Lapidus A."/>
            <person name="Glavina del Rio T."/>
            <person name="Dalin E."/>
            <person name="Tice H."/>
            <person name="Bruce D."/>
            <person name="Goodwin L."/>
            <person name="Pitluck S."/>
            <person name="Saunders E."/>
            <person name="Brettin T."/>
            <person name="Detter J.C."/>
            <person name="Han C."/>
            <person name="Larimer F."/>
            <person name="Land M."/>
            <person name="Hauser L."/>
            <person name="Kyrpides N."/>
            <person name="Ovchinnikiva G."/>
            <person name="Beliaev A."/>
        </authorList>
    </citation>
    <scope>NUCLEOTIDE SEQUENCE [LARGE SCALE GENOMIC DNA]</scope>
    <source>
        <strain>K</strain>
    </source>
</reference>
<name>MUTL_ANASK</name>
<evidence type="ECO:0000255" key="1">
    <source>
        <dbReference type="HAMAP-Rule" id="MF_00149"/>
    </source>
</evidence>